<sequence>MSDENDTPEELADISGVGPSKAEALAEAGFESVADVQAADQSELAEADGIGNALAARIKADVGGLEVEADTDAEVEEVGGDDEADTDADVETELRARGLTEKTPDLSEDEQRLLQKRRSVNTPQFNRQDYHKKKRTPTSWRRPKGTLSKQRRGIKGKGDTVEAGFRTPTAVRGKHPSGFEEVRVHNTDDLAGVDPDTEAARIASKVGARKRERIEEHAESQGIRVLNPTYVEVEVEDNE</sequence>
<protein>
    <recommendedName>
        <fullName evidence="3">Large ribosomal subunit protein eL32</fullName>
    </recommendedName>
    <alternativeName>
        <fullName>50S ribosomal protein L32e</fullName>
    </alternativeName>
    <alternativeName>
        <fullName>HL5</fullName>
    </alternativeName>
</protein>
<dbReference type="EMBL" id="AE004437">
    <property type="protein sequence ID" value="AAG19953.1"/>
    <property type="molecule type" value="Genomic_DNA"/>
</dbReference>
<dbReference type="PIR" id="E84323">
    <property type="entry name" value="E84323"/>
</dbReference>
<dbReference type="PIR" id="S07437">
    <property type="entry name" value="S07437"/>
</dbReference>
<dbReference type="RefSeq" id="WP_010903251.1">
    <property type="nucleotide sequence ID" value="NC_002607.1"/>
</dbReference>
<dbReference type="SMR" id="Q9HPB7"/>
<dbReference type="STRING" id="64091.VNG_1711G"/>
<dbReference type="PaxDb" id="64091-VNG_1711G"/>
<dbReference type="KEGG" id="hal:VNG_1711G"/>
<dbReference type="PATRIC" id="fig|64091.14.peg.1305"/>
<dbReference type="HOGENOM" id="CLU_071479_0_0_2"/>
<dbReference type="InParanoid" id="Q9HPB7"/>
<dbReference type="OrthoDB" id="372100at2157"/>
<dbReference type="PhylomeDB" id="Q9HPB7"/>
<dbReference type="Proteomes" id="UP000000554">
    <property type="component" value="Chromosome"/>
</dbReference>
<dbReference type="GO" id="GO:0022625">
    <property type="term" value="C:cytosolic large ribosomal subunit"/>
    <property type="evidence" value="ECO:0000318"/>
    <property type="project" value="GO_Central"/>
</dbReference>
<dbReference type="GO" id="GO:0003677">
    <property type="term" value="F:DNA binding"/>
    <property type="evidence" value="ECO:0007669"/>
    <property type="project" value="InterPro"/>
</dbReference>
<dbReference type="GO" id="GO:0000166">
    <property type="term" value="F:nucleotide binding"/>
    <property type="evidence" value="ECO:0007669"/>
    <property type="project" value="InterPro"/>
</dbReference>
<dbReference type="GO" id="GO:0003735">
    <property type="term" value="F:structural constituent of ribosome"/>
    <property type="evidence" value="ECO:0007669"/>
    <property type="project" value="InterPro"/>
</dbReference>
<dbReference type="GO" id="GO:0006281">
    <property type="term" value="P:DNA repair"/>
    <property type="evidence" value="ECO:0007669"/>
    <property type="project" value="InterPro"/>
</dbReference>
<dbReference type="GO" id="GO:0006412">
    <property type="term" value="P:translation"/>
    <property type="evidence" value="ECO:0007669"/>
    <property type="project" value="UniProtKB-UniRule"/>
</dbReference>
<dbReference type="CDD" id="cd00513">
    <property type="entry name" value="Ribosomal_L32_L32e"/>
    <property type="match status" value="1"/>
</dbReference>
<dbReference type="Gene3D" id="1.10.150.20">
    <property type="entry name" value="5' to 3' exonuclease, C-terminal subdomain"/>
    <property type="match status" value="1"/>
</dbReference>
<dbReference type="HAMAP" id="MF_00810">
    <property type="entry name" value="Ribosomal_eL32"/>
    <property type="match status" value="1"/>
</dbReference>
<dbReference type="InterPro" id="IPR010995">
    <property type="entry name" value="DNA_repair_Rad51/TF_NusA_a-hlx"/>
</dbReference>
<dbReference type="InterPro" id="IPR003583">
    <property type="entry name" value="Hlx-hairpin-Hlx_DNA-bd_motif"/>
</dbReference>
<dbReference type="InterPro" id="IPR001515">
    <property type="entry name" value="Ribosomal_eL32"/>
</dbReference>
<dbReference type="InterPro" id="IPR023654">
    <property type="entry name" value="Ribosomal_eL32_arc"/>
</dbReference>
<dbReference type="InterPro" id="IPR018263">
    <property type="entry name" value="Ribosomal_eL32_CS"/>
</dbReference>
<dbReference type="InterPro" id="IPR036351">
    <property type="entry name" value="Ribosomal_eL32_sf"/>
</dbReference>
<dbReference type="NCBIfam" id="NF006332">
    <property type="entry name" value="PRK08562.1"/>
    <property type="match status" value="1"/>
</dbReference>
<dbReference type="NCBIfam" id="NF009401">
    <property type="entry name" value="PRK12766.1"/>
    <property type="match status" value="1"/>
</dbReference>
<dbReference type="PANTHER" id="PTHR23413">
    <property type="entry name" value="60S RIBOSOMAL PROTEIN L32 AND DNA-DIRECTED RNA POLYMERASE II, SUBUNIT N"/>
    <property type="match status" value="1"/>
</dbReference>
<dbReference type="PANTHER" id="PTHR23413:SF1">
    <property type="entry name" value="RIBOSOMAL PROTEIN L32"/>
    <property type="match status" value="1"/>
</dbReference>
<dbReference type="Pfam" id="PF14520">
    <property type="entry name" value="HHH_5"/>
    <property type="match status" value="1"/>
</dbReference>
<dbReference type="Pfam" id="PF01655">
    <property type="entry name" value="Ribosomal_L32e"/>
    <property type="match status" value="1"/>
</dbReference>
<dbReference type="SMART" id="SM00278">
    <property type="entry name" value="HhH1"/>
    <property type="match status" value="2"/>
</dbReference>
<dbReference type="SMART" id="SM01393">
    <property type="entry name" value="Ribosomal_L32e"/>
    <property type="match status" value="1"/>
</dbReference>
<dbReference type="SUPFAM" id="SSF47794">
    <property type="entry name" value="Rad51 N-terminal domain-like"/>
    <property type="match status" value="1"/>
</dbReference>
<dbReference type="SUPFAM" id="SSF52042">
    <property type="entry name" value="Ribosomal protein L32e"/>
    <property type="match status" value="1"/>
</dbReference>
<dbReference type="PROSITE" id="PS00580">
    <property type="entry name" value="RIBOSOMAL_L32E"/>
    <property type="match status" value="1"/>
</dbReference>
<feature type="initiator methionine" description="Removed" evidence="2">
    <location>
        <position position="1"/>
    </location>
</feature>
<feature type="chain" id="PRO_0000131149" description="Large ribosomal subunit protein eL32">
    <location>
        <begin position="2"/>
        <end position="239"/>
    </location>
</feature>
<feature type="region of interest" description="Disordered" evidence="1">
    <location>
        <begin position="1"/>
        <end position="23"/>
    </location>
</feature>
<feature type="region of interest" description="Disordered" evidence="1">
    <location>
        <begin position="64"/>
        <end position="178"/>
    </location>
</feature>
<feature type="compositionally biased region" description="Acidic residues" evidence="1">
    <location>
        <begin position="1"/>
        <end position="12"/>
    </location>
</feature>
<feature type="compositionally biased region" description="Acidic residues" evidence="1">
    <location>
        <begin position="67"/>
        <end position="91"/>
    </location>
</feature>
<feature type="compositionally biased region" description="Basic and acidic residues" evidence="1">
    <location>
        <begin position="92"/>
        <end position="113"/>
    </location>
</feature>
<feature type="compositionally biased region" description="Basic residues" evidence="1">
    <location>
        <begin position="130"/>
        <end position="155"/>
    </location>
</feature>
<comment type="similarity">
    <text evidence="3">Belongs to the eukaryotic ribosomal protein eL32 family.</text>
</comment>
<accession>Q9HPB7</accession>
<accession>P05965</accession>
<organism>
    <name type="scientific">Halobacterium salinarum (strain ATCC 700922 / JCM 11081 / NRC-1)</name>
    <name type="common">Halobacterium halobium</name>
    <dbReference type="NCBI Taxonomy" id="64091"/>
    <lineage>
        <taxon>Archaea</taxon>
        <taxon>Methanobacteriati</taxon>
        <taxon>Methanobacteriota</taxon>
        <taxon>Stenosarchaea group</taxon>
        <taxon>Halobacteria</taxon>
        <taxon>Halobacteriales</taxon>
        <taxon>Halobacteriaceae</taxon>
        <taxon>Halobacterium</taxon>
        <taxon>Halobacterium salinarum NRC-34001</taxon>
    </lineage>
</organism>
<gene>
    <name type="primary">rpl32e</name>
    <name type="ordered locus">VNG_1711G</name>
</gene>
<proteinExistence type="evidence at protein level"/>
<name>RL32_HALSA</name>
<evidence type="ECO:0000256" key="1">
    <source>
        <dbReference type="SAM" id="MobiDB-lite"/>
    </source>
</evidence>
<evidence type="ECO:0000269" key="2">
    <source>
    </source>
</evidence>
<evidence type="ECO:0000305" key="3"/>
<reference key="1">
    <citation type="journal article" date="2000" name="Proc. Natl. Acad. Sci. U.S.A.">
        <title>Genome sequence of Halobacterium species NRC-1.</title>
        <authorList>
            <person name="Ng W.V."/>
            <person name="Kennedy S.P."/>
            <person name="Mahairas G.G."/>
            <person name="Berquist B."/>
            <person name="Pan M."/>
            <person name="Shukla H.D."/>
            <person name="Lasky S.R."/>
            <person name="Baliga N.S."/>
            <person name="Thorsson V."/>
            <person name="Sbrogna J."/>
            <person name="Swartzell S."/>
            <person name="Weir D."/>
            <person name="Hall J."/>
            <person name="Dahl T.A."/>
            <person name="Welti R."/>
            <person name="Goo Y.A."/>
            <person name="Leithauser B."/>
            <person name="Keller K."/>
            <person name="Cruz R."/>
            <person name="Danson M.J."/>
            <person name="Hough D.W."/>
            <person name="Maddocks D.G."/>
            <person name="Jablonski P.E."/>
            <person name="Krebs M.P."/>
            <person name="Angevine C.M."/>
            <person name="Dale H."/>
            <person name="Isenbarger T.A."/>
            <person name="Peck R.F."/>
            <person name="Pohlschroder M."/>
            <person name="Spudich J.L."/>
            <person name="Jung K.-H."/>
            <person name="Alam M."/>
            <person name="Freitas T."/>
            <person name="Hou S."/>
            <person name="Daniels C.J."/>
            <person name="Dennis P.P."/>
            <person name="Omer A.D."/>
            <person name="Ebhardt H."/>
            <person name="Lowe T.M."/>
            <person name="Liang P."/>
            <person name="Riley M."/>
            <person name="Hood L."/>
            <person name="DasSarma S."/>
        </authorList>
    </citation>
    <scope>NUCLEOTIDE SEQUENCE [LARGE SCALE GENOMIC DNA]</scope>
    <source>
        <strain>ATCC 700922 / JCM 11081 / NRC-1</strain>
    </source>
</reference>
<reference key="2">
    <citation type="journal article" date="1984" name="Can. J. Biochem. Cell Biol.">
        <title>Purification, properties, and N-terminal amino acid sequence of certain 50S ribosomal subunit proteins from the archaebacterium Halobacterium cutirubrum.</title>
        <authorList>
            <person name="Matheson A.T."/>
            <person name="Yaguchi M."/>
            <person name="Christensen P."/>
            <person name="Rollin C.F."/>
            <person name="Hasnain S."/>
        </authorList>
    </citation>
    <scope>PROTEIN SEQUENCE OF 2-36</scope>
</reference>
<keyword id="KW-0903">Direct protein sequencing</keyword>
<keyword id="KW-1185">Reference proteome</keyword>
<keyword id="KW-0687">Ribonucleoprotein</keyword>
<keyword id="KW-0689">Ribosomal protein</keyword>